<feature type="chain" id="PRO_0000235903" description="Chaperone ric-8">
    <location>
        <begin position="1"/>
        <end position="567"/>
    </location>
</feature>
<dbReference type="EMBL" id="HE601467">
    <property type="protein sequence ID" value="CAP32675.3"/>
    <property type="molecule type" value="Genomic_DNA"/>
</dbReference>
<dbReference type="SMR" id="Q61A92"/>
<dbReference type="FunCoup" id="Q61A92">
    <property type="interactions" value="2438"/>
</dbReference>
<dbReference type="STRING" id="6238.Q61A92"/>
<dbReference type="EnsemblMetazoa" id="CBG13878.1">
    <property type="protein sequence ID" value="CBG13878.1"/>
    <property type="gene ID" value="WBGene00034564"/>
</dbReference>
<dbReference type="KEGG" id="cbr:CBG_13878"/>
<dbReference type="CTD" id="8576771"/>
<dbReference type="WormBase" id="CBG13878">
    <property type="protein sequence ID" value="CBP09517"/>
    <property type="gene ID" value="WBGene00034564"/>
    <property type="gene designation" value="Cbr-ric-8"/>
</dbReference>
<dbReference type="eggNOG" id="KOG4464">
    <property type="taxonomic scope" value="Eukaryota"/>
</dbReference>
<dbReference type="HOGENOM" id="CLU_018602_1_0_1"/>
<dbReference type="InParanoid" id="Q61A92"/>
<dbReference type="OMA" id="ETLCDPP"/>
<dbReference type="Proteomes" id="UP000008549">
    <property type="component" value="Unassembled WGS sequence"/>
</dbReference>
<dbReference type="GO" id="GO:0005818">
    <property type="term" value="C:aster"/>
    <property type="evidence" value="ECO:0007669"/>
    <property type="project" value="EnsemblMetazoa"/>
</dbReference>
<dbReference type="GO" id="GO:0005938">
    <property type="term" value="C:cell cortex"/>
    <property type="evidence" value="ECO:0007669"/>
    <property type="project" value="UniProtKB-SubCell"/>
</dbReference>
<dbReference type="GO" id="GO:0005737">
    <property type="term" value="C:cytoplasm"/>
    <property type="evidence" value="ECO:0000318"/>
    <property type="project" value="GO_Central"/>
</dbReference>
<dbReference type="GO" id="GO:0005828">
    <property type="term" value="C:kinetochore microtubule"/>
    <property type="evidence" value="ECO:0007669"/>
    <property type="project" value="EnsemblMetazoa"/>
</dbReference>
<dbReference type="GO" id="GO:0001965">
    <property type="term" value="F:G-protein alpha-subunit binding"/>
    <property type="evidence" value="ECO:0000318"/>
    <property type="project" value="GO_Central"/>
</dbReference>
<dbReference type="GO" id="GO:0005085">
    <property type="term" value="F:guanyl-nucleotide exchange factor activity"/>
    <property type="evidence" value="ECO:0000318"/>
    <property type="project" value="GO_Central"/>
</dbReference>
<dbReference type="GO" id="GO:0007186">
    <property type="term" value="P:G protein-coupled receptor signaling pathway"/>
    <property type="evidence" value="ECO:0000318"/>
    <property type="project" value="GO_Central"/>
</dbReference>
<dbReference type="GO" id="GO:0072697">
    <property type="term" value="P:protein localization to cell cortex"/>
    <property type="evidence" value="ECO:0007669"/>
    <property type="project" value="EnsemblMetazoa"/>
</dbReference>
<dbReference type="GO" id="GO:2000114">
    <property type="term" value="P:regulation of establishment of cell polarity"/>
    <property type="evidence" value="ECO:0007669"/>
    <property type="project" value="EnsemblMetazoa"/>
</dbReference>
<dbReference type="GO" id="GO:0060259">
    <property type="term" value="P:regulation of feeding behavior"/>
    <property type="evidence" value="ECO:0007669"/>
    <property type="project" value="EnsemblMetazoa"/>
</dbReference>
<dbReference type="InterPro" id="IPR008376">
    <property type="entry name" value="Chaperone_Ric-8_A/B"/>
</dbReference>
<dbReference type="InterPro" id="IPR019318">
    <property type="entry name" value="Gua_nucleotide_exch_fac_Ric8"/>
</dbReference>
<dbReference type="PANTHER" id="PTHR12425">
    <property type="entry name" value="SYNEMBRYN"/>
    <property type="match status" value="1"/>
</dbReference>
<dbReference type="PANTHER" id="PTHR12425:SF5">
    <property type="entry name" value="SYNEMBRYN"/>
    <property type="match status" value="1"/>
</dbReference>
<dbReference type="Pfam" id="PF10165">
    <property type="entry name" value="Ric8"/>
    <property type="match status" value="1"/>
</dbReference>
<dbReference type="PRINTS" id="PR01802">
    <property type="entry name" value="SYNEMBRYN"/>
</dbReference>
<reference key="1">
    <citation type="journal article" date="2003" name="PLoS Biol.">
        <title>The genome sequence of Caenorhabditis briggsae: a platform for comparative genomics.</title>
        <authorList>
            <person name="Stein L.D."/>
            <person name="Bao Z."/>
            <person name="Blasiar D."/>
            <person name="Blumenthal T."/>
            <person name="Brent M.R."/>
            <person name="Chen N."/>
            <person name="Chinwalla A."/>
            <person name="Clarke L."/>
            <person name="Clee C."/>
            <person name="Coghlan A."/>
            <person name="Coulson A."/>
            <person name="D'Eustachio P."/>
            <person name="Fitch D.H.A."/>
            <person name="Fulton L.A."/>
            <person name="Fulton R.E."/>
            <person name="Griffiths-Jones S."/>
            <person name="Harris T.W."/>
            <person name="Hillier L.W."/>
            <person name="Kamath R."/>
            <person name="Kuwabara P.E."/>
            <person name="Mardis E.R."/>
            <person name="Marra M.A."/>
            <person name="Miner T.L."/>
            <person name="Minx P."/>
            <person name="Mullikin J.C."/>
            <person name="Plumb R.W."/>
            <person name="Rogers J."/>
            <person name="Schein J.E."/>
            <person name="Sohrmann M."/>
            <person name="Spieth J."/>
            <person name="Stajich J.E."/>
            <person name="Wei C."/>
            <person name="Willey D."/>
            <person name="Wilson R.K."/>
            <person name="Durbin R.M."/>
            <person name="Waterston R.H."/>
        </authorList>
    </citation>
    <scope>NUCLEOTIDE SEQUENCE [LARGE SCALE GENOMIC DNA]</scope>
    <source>
        <strain>AF16</strain>
    </source>
</reference>
<comment type="function">
    <text evidence="1">Chaperone that specifically binds and folds some, but not all, nascent G alpha proteins prior to G protein heterotrimer formation, promoting their stability and activity. Also acts as a guanine nucleotide exchange factor (GEF) for G alpha proteins by stimulating exchange of bound GDP for free GTP. Able to facilitate synaptic transmission in the nervous system probably by activating G(q)-alpha (egl-30). Also able to activate the G(s)-alpha in synaptic signaling network. Plays a key role in asymmetric spindle positioning, a step for asymmetric cell division that generates cell diversity during development by activating G(i)-alpha protein goa-1 and gpa-16 independently of G-protein coupled receptors. While it acts as a GEF for goa-1, it has no GEF activity toward gpa-16. In addition to its GEF activity, it is required for cortical subcellular localization of G-alpha proteins such as gpa-16. Also required for the interaction of goa-1 and gpr-1/2, suggesting that it may act by generating G-alpha proteins free from G-beta-gamma subunits, enabling gpr-1/2 to mediate asymmetric cell division.</text>
</comment>
<comment type="subcellular location">
    <subcellularLocation>
        <location evidence="1">Cytoplasm</location>
        <location evidence="1">Cell cortex</location>
    </subcellularLocation>
    <text evidence="1">Localizes to the cell cortex.</text>
</comment>
<comment type="similarity">
    <text evidence="2">Belongs to the synembryn family.</text>
</comment>
<evidence type="ECO:0000250" key="1">
    <source>
        <dbReference type="UniProtKB" id="Q9GSX9"/>
    </source>
</evidence>
<evidence type="ECO:0000305" key="2"/>
<organism>
    <name type="scientific">Caenorhabditis briggsae</name>
    <dbReference type="NCBI Taxonomy" id="6238"/>
    <lineage>
        <taxon>Eukaryota</taxon>
        <taxon>Metazoa</taxon>
        <taxon>Ecdysozoa</taxon>
        <taxon>Nematoda</taxon>
        <taxon>Chromadorea</taxon>
        <taxon>Rhabditida</taxon>
        <taxon>Rhabditina</taxon>
        <taxon>Rhabditomorpha</taxon>
        <taxon>Rhabditoidea</taxon>
        <taxon>Rhabditidae</taxon>
        <taxon>Peloderinae</taxon>
        <taxon>Caenorhabditis</taxon>
    </lineage>
</organism>
<gene>
    <name type="primary">ric-8</name>
    <name type="ORF">CBG13878</name>
</gene>
<accession>Q61A92</accession>
<accession>A8XJ50</accession>
<protein>
    <recommendedName>
        <fullName>Chaperone ric-8</fullName>
    </recommendedName>
    <alternativeName>
        <fullName>Resistance to inhibitors of cholinesterase protein 8</fullName>
    </alternativeName>
    <alternativeName>
        <fullName>Synembryn</fullName>
    </alternativeName>
</protein>
<sequence length="567" mass="63621">MPGDQLTEETIQRVFLNATSAKIEEFFSKWNFSNANSTKFGMSEAERNLLGDEISAKIDNDDLASILLETVRLISRERQGLESLLNENLCDTILKLAGITPVVGYPRSVHALMEAQKCLVNTMFHSAKMRERFYMNLVNGDQIQRFLSEFEDSRRENSNIQWIREMNPTQAAEVWYFYHRIAFIATAMDKGFQRHWADQSTTVSNILCAAEVCLQKASDDVANLDLLRANEAMKTFFNVFCHFHGDVPGLDEKNTHLACRILRDVICSGIPNDDVIQSAIHALSVPPLPMDLSVLLSDPNFPIVPLPETISEEERVHPRDYYVNMTLTEAILAALDKQLIKAVDLLNSVPFNQVSPEGNTLVDLSGPYFQALARLCVESKYARRYCRIRVLPPLVADEVKKRPEEHDSLRGRIVRVMMLPSTTKEVASEFLFIICKRSVSRMIKYVGFGHSAGHLANFGLLGQINQPKHASDSEDSETEDYNAVKDNVNPVTGAMYPPDHGSAMDGMSDAQKEFEAMKLVDAMNKLMDQGLVKPGTIGDDGKVREVSHVLELLKDAPEPDTMDSDSD</sequence>
<keyword id="KW-0143">Chaperone</keyword>
<keyword id="KW-0963">Cytoplasm</keyword>
<keyword id="KW-0217">Developmental protein</keyword>
<keyword id="KW-0344">Guanine-nucleotide releasing factor</keyword>
<keyword id="KW-1185">Reference proteome</keyword>
<proteinExistence type="inferred from homology"/>
<name>RIC8_CAEBR</name>